<organism>
    <name type="scientific">Rickettsia felis (strain ATCC VR-1525 / URRWXCal2)</name>
    <name type="common">Rickettsia azadi</name>
    <dbReference type="NCBI Taxonomy" id="315456"/>
    <lineage>
        <taxon>Bacteria</taxon>
        <taxon>Pseudomonadati</taxon>
        <taxon>Pseudomonadota</taxon>
        <taxon>Alphaproteobacteria</taxon>
        <taxon>Rickettsiales</taxon>
        <taxon>Rickettsiaceae</taxon>
        <taxon>Rickettsieae</taxon>
        <taxon>Rickettsia</taxon>
        <taxon>spotted fever group</taxon>
    </lineage>
</organism>
<proteinExistence type="inferred from homology"/>
<reference key="1">
    <citation type="journal article" date="2005" name="PLoS Biol.">
        <title>The genome sequence of Rickettsia felis identifies the first putative conjugative plasmid in an obligate intracellular parasite.</title>
        <authorList>
            <person name="Ogata H."/>
            <person name="Renesto P."/>
            <person name="Audic S."/>
            <person name="Robert C."/>
            <person name="Blanc G."/>
            <person name="Fournier P.-E."/>
            <person name="Parinello H."/>
            <person name="Claverie J.-M."/>
            <person name="Raoult D."/>
        </authorList>
    </citation>
    <scope>NUCLEOTIDE SEQUENCE [LARGE SCALE GENOMIC DNA]</scope>
    <source>
        <strain>ATCC VR-1525 / URRWXCal2</strain>
    </source>
</reference>
<accession>Q4UKJ1</accession>
<comment type="function">
    <text evidence="1">May be involved in recombinational repair of damaged DNA.</text>
</comment>
<comment type="similarity">
    <text evidence="3">Belongs to the RecN family.</text>
</comment>
<protein>
    <recommendedName>
        <fullName>DNA repair protein RecN</fullName>
    </recommendedName>
    <alternativeName>
        <fullName>Recombination protein N</fullName>
    </alternativeName>
</protein>
<evidence type="ECO:0000250" key="1"/>
<evidence type="ECO:0000255" key="2"/>
<evidence type="ECO:0000305" key="3"/>
<keyword id="KW-0067">ATP-binding</keyword>
<keyword id="KW-0227">DNA damage</keyword>
<keyword id="KW-0234">DNA repair</keyword>
<keyword id="KW-0547">Nucleotide-binding</keyword>
<sequence>MFHSLLVKNFILIDELEIEFNKGLCVITGETGAGKSILLDAILFCLGYKTSNNIIKRGKDYAVVNIIFSLNEEIKNFLIQNFIEPEELLLVKCLQKAEGRKNFFINNQVVNKAIMQQLATYLFELHGQNNNISLLEANTQRDILDSYGNLLDFRAELSKCYQTWQNTRKEIAEITLKQNSIDQEIDYLSFATEELTKLNIQIGEEEKLANIRKDLQNKDKDLQLIKDVLEQINNPEINTSINRAEKLLARQGDNERFEAIATSLEEAYNNLEEARQGLSNLLDSFNYEEYNLEETEERLFLIKAISRKYNVPADELGIFLDKSLEQLGILKNKIANSNELKAQEMLLQKKYYELASDLSVKRLIAAKHLEESLHQELKQLKMAKAIFEIEIIAGKEPTASGNDDIVFKASTNPGMATEAINKIASGGELSRFMLALKTSLFDKMVKPSIIFDEIDVGIGGEVADKVGERLKKLSSVTQVIVITHQPQVAGKADLHIKIEKTQLEKETKVTVKALNLAERQEELARMISGKTITEASLKAAKELLHL</sequence>
<feature type="chain" id="PRO_0000286656" description="DNA repair protein RecN">
    <location>
        <begin position="1"/>
        <end position="546"/>
    </location>
</feature>
<feature type="binding site" evidence="2">
    <location>
        <begin position="29"/>
        <end position="36"/>
    </location>
    <ligand>
        <name>ATP</name>
        <dbReference type="ChEBI" id="CHEBI:30616"/>
    </ligand>
</feature>
<name>RECN_RICFE</name>
<dbReference type="EMBL" id="CP000053">
    <property type="protein sequence ID" value="AAY61940.1"/>
    <property type="molecule type" value="Genomic_DNA"/>
</dbReference>
<dbReference type="SMR" id="Q4UKJ1"/>
<dbReference type="STRING" id="315456.RF_1089"/>
<dbReference type="KEGG" id="rfe:RF_1089"/>
<dbReference type="eggNOG" id="COG0497">
    <property type="taxonomic scope" value="Bacteria"/>
</dbReference>
<dbReference type="HOGENOM" id="CLU_018297_3_1_5"/>
<dbReference type="OrthoDB" id="9806954at2"/>
<dbReference type="Proteomes" id="UP000008548">
    <property type="component" value="Chromosome"/>
</dbReference>
<dbReference type="GO" id="GO:0043590">
    <property type="term" value="C:bacterial nucleoid"/>
    <property type="evidence" value="ECO:0007669"/>
    <property type="project" value="TreeGrafter"/>
</dbReference>
<dbReference type="GO" id="GO:0005524">
    <property type="term" value="F:ATP binding"/>
    <property type="evidence" value="ECO:0007669"/>
    <property type="project" value="UniProtKB-KW"/>
</dbReference>
<dbReference type="GO" id="GO:0006310">
    <property type="term" value="P:DNA recombination"/>
    <property type="evidence" value="ECO:0007669"/>
    <property type="project" value="InterPro"/>
</dbReference>
<dbReference type="GO" id="GO:0006281">
    <property type="term" value="P:DNA repair"/>
    <property type="evidence" value="ECO:0007669"/>
    <property type="project" value="UniProtKB-KW"/>
</dbReference>
<dbReference type="GO" id="GO:0009432">
    <property type="term" value="P:SOS response"/>
    <property type="evidence" value="ECO:0007669"/>
    <property type="project" value="TreeGrafter"/>
</dbReference>
<dbReference type="CDD" id="cd03241">
    <property type="entry name" value="ABC_RecN"/>
    <property type="match status" value="2"/>
</dbReference>
<dbReference type="Gene3D" id="3.40.50.300">
    <property type="entry name" value="P-loop containing nucleotide triphosphate hydrolases"/>
    <property type="match status" value="2"/>
</dbReference>
<dbReference type="InterPro" id="IPR004604">
    <property type="entry name" value="DNA_recomb/repair_RecN"/>
</dbReference>
<dbReference type="InterPro" id="IPR027417">
    <property type="entry name" value="P-loop_NTPase"/>
</dbReference>
<dbReference type="InterPro" id="IPR003395">
    <property type="entry name" value="RecF/RecN/SMC_N"/>
</dbReference>
<dbReference type="NCBIfam" id="TIGR00634">
    <property type="entry name" value="recN"/>
    <property type="match status" value="1"/>
</dbReference>
<dbReference type="PANTHER" id="PTHR11059">
    <property type="entry name" value="DNA REPAIR PROTEIN RECN"/>
    <property type="match status" value="1"/>
</dbReference>
<dbReference type="PANTHER" id="PTHR11059:SF0">
    <property type="entry name" value="DNA REPAIR PROTEIN RECN"/>
    <property type="match status" value="1"/>
</dbReference>
<dbReference type="Pfam" id="PF02463">
    <property type="entry name" value="SMC_N"/>
    <property type="match status" value="1"/>
</dbReference>
<dbReference type="PIRSF" id="PIRSF003128">
    <property type="entry name" value="RecN"/>
    <property type="match status" value="1"/>
</dbReference>
<dbReference type="SUPFAM" id="SSF52540">
    <property type="entry name" value="P-loop containing nucleoside triphosphate hydrolases"/>
    <property type="match status" value="2"/>
</dbReference>
<gene>
    <name type="primary">recN</name>
    <name type="ordered locus">RF_1089</name>
</gene>